<sequence length="179" mass="19681">MSTGSLSDVEDLQEVEMLDCDSLKVDSNKEFGTSNESTEEGSNCENGSPQKGRGGLGKRRKAPTKKSPLSGVSQEGKQVQRNAANARERARMRVLSKAFSRLKTTLPWVPPDTKLSKLDTLRLASSYIAHLRQILANDKYENGYIHPVNLTWPFMVAGKPENDLKEVVTANRLCGTTAS</sequence>
<reference key="1">
    <citation type="journal article" date="1998" name="Mech. Dev.">
        <title>Cloning of capsulin, a basic helix-loop-helix factor expressed in progenitor cells of the pericardium and the coronary arteries.</title>
        <authorList>
            <person name="Hidai H."/>
            <person name="Bardales R."/>
            <person name="Goodwin R."/>
            <person name="Quertermous T."/>
            <person name="Quertermous E.E."/>
        </authorList>
    </citation>
    <scope>NUCLEOTIDE SEQUENCE [MRNA]</scope>
    <source>
        <tissue>Embryo</tissue>
    </source>
</reference>
<reference key="2">
    <citation type="journal article" date="1998" name="Dev. Dyn.">
        <title>Epicardin: a novel basic helix-loop-helix transcription factor gene expressed in epicardium, branchial arch myoblasts, and mesenchyme of developing lung, gut, kidney, and gonads.</title>
        <authorList>
            <person name="Robb L."/>
            <person name="Mifsud L."/>
            <person name="Hartley L."/>
            <person name="Biben C."/>
            <person name="Copeland N.G."/>
            <person name="Gilbert D.J."/>
            <person name="Jenkins N.A."/>
            <person name="Harvey R.P."/>
        </authorList>
    </citation>
    <scope>NUCLEOTIDE SEQUENCE [MRNA]</scope>
    <source>
        <strain>BALB/cJ</strain>
        <tissue>Embryonic heart</tissue>
        <tissue>Fibroblast</tissue>
        <tissue>Uterus</tissue>
    </source>
</reference>
<reference key="3">
    <citation type="journal article" date="1998" name="Mech. Dev.">
        <title>Capsulin: a novel bHLH transcription factor expressed in epicardial progenitors and mesenchyme of visceral organs.</title>
        <authorList>
            <person name="Lu J.-R."/>
            <person name="Richardson J.A."/>
            <person name="Olson E.N."/>
        </authorList>
    </citation>
    <scope>NUCLEOTIDE SEQUENCE [MRNA]</scope>
    <source>
        <tissue>Embryo</tissue>
    </source>
</reference>
<reference key="4">
    <citation type="journal article" date="1999" name="Development">
        <title>The basic-helix-loop-helix protein pod1 is critically important for kidney and lung organogenesis.</title>
        <authorList>
            <person name="Quaggin S.E."/>
            <person name="Schwartz L."/>
            <person name="Cui S."/>
            <person name="Igarashi P."/>
            <person name="Deimling J."/>
            <person name="Post M."/>
            <person name="Rossant J."/>
        </authorList>
    </citation>
    <scope>NUCLEOTIDE SEQUENCE [MRNA]</scope>
    <source>
        <strain>129/Sv</strain>
    </source>
</reference>
<reference key="5">
    <citation type="journal article" date="2001" name="Mech. Dev.">
        <title>Pod-1/Capsulin shows a sex- and stage-dependent expression pattern in the mouse gonad development and represses expression of Ad4BP/SF-1.</title>
        <authorList>
            <person name="Tamura M."/>
            <person name="Kanno Y."/>
            <person name="Chuma S."/>
            <person name="Saito T."/>
            <person name="Nakatsuji N."/>
        </authorList>
    </citation>
    <scope>NUCLEOTIDE SEQUENCE [MRNA]</scope>
</reference>
<reference key="6">
    <citation type="journal article" date="2005" name="Science">
        <title>The transcriptional landscape of the mammalian genome.</title>
        <authorList>
            <person name="Carninci P."/>
            <person name="Kasukawa T."/>
            <person name="Katayama S."/>
            <person name="Gough J."/>
            <person name="Frith M.C."/>
            <person name="Maeda N."/>
            <person name="Oyama R."/>
            <person name="Ravasi T."/>
            <person name="Lenhard B."/>
            <person name="Wells C."/>
            <person name="Kodzius R."/>
            <person name="Shimokawa K."/>
            <person name="Bajic V.B."/>
            <person name="Brenner S.E."/>
            <person name="Batalov S."/>
            <person name="Forrest A.R."/>
            <person name="Zavolan M."/>
            <person name="Davis M.J."/>
            <person name="Wilming L.G."/>
            <person name="Aidinis V."/>
            <person name="Allen J.E."/>
            <person name="Ambesi-Impiombato A."/>
            <person name="Apweiler R."/>
            <person name="Aturaliya R.N."/>
            <person name="Bailey T.L."/>
            <person name="Bansal M."/>
            <person name="Baxter L."/>
            <person name="Beisel K.W."/>
            <person name="Bersano T."/>
            <person name="Bono H."/>
            <person name="Chalk A.M."/>
            <person name="Chiu K.P."/>
            <person name="Choudhary V."/>
            <person name="Christoffels A."/>
            <person name="Clutterbuck D.R."/>
            <person name="Crowe M.L."/>
            <person name="Dalla E."/>
            <person name="Dalrymple B.P."/>
            <person name="de Bono B."/>
            <person name="Della Gatta G."/>
            <person name="di Bernardo D."/>
            <person name="Down T."/>
            <person name="Engstrom P."/>
            <person name="Fagiolini M."/>
            <person name="Faulkner G."/>
            <person name="Fletcher C.F."/>
            <person name="Fukushima T."/>
            <person name="Furuno M."/>
            <person name="Futaki S."/>
            <person name="Gariboldi M."/>
            <person name="Georgii-Hemming P."/>
            <person name="Gingeras T.R."/>
            <person name="Gojobori T."/>
            <person name="Green R.E."/>
            <person name="Gustincich S."/>
            <person name="Harbers M."/>
            <person name="Hayashi Y."/>
            <person name="Hensch T.K."/>
            <person name="Hirokawa N."/>
            <person name="Hill D."/>
            <person name="Huminiecki L."/>
            <person name="Iacono M."/>
            <person name="Ikeo K."/>
            <person name="Iwama A."/>
            <person name="Ishikawa T."/>
            <person name="Jakt M."/>
            <person name="Kanapin A."/>
            <person name="Katoh M."/>
            <person name="Kawasawa Y."/>
            <person name="Kelso J."/>
            <person name="Kitamura H."/>
            <person name="Kitano H."/>
            <person name="Kollias G."/>
            <person name="Krishnan S.P."/>
            <person name="Kruger A."/>
            <person name="Kummerfeld S.K."/>
            <person name="Kurochkin I.V."/>
            <person name="Lareau L.F."/>
            <person name="Lazarevic D."/>
            <person name="Lipovich L."/>
            <person name="Liu J."/>
            <person name="Liuni S."/>
            <person name="McWilliam S."/>
            <person name="Madan Babu M."/>
            <person name="Madera M."/>
            <person name="Marchionni L."/>
            <person name="Matsuda H."/>
            <person name="Matsuzawa S."/>
            <person name="Miki H."/>
            <person name="Mignone F."/>
            <person name="Miyake S."/>
            <person name="Morris K."/>
            <person name="Mottagui-Tabar S."/>
            <person name="Mulder N."/>
            <person name="Nakano N."/>
            <person name="Nakauchi H."/>
            <person name="Ng P."/>
            <person name="Nilsson R."/>
            <person name="Nishiguchi S."/>
            <person name="Nishikawa S."/>
            <person name="Nori F."/>
            <person name="Ohara O."/>
            <person name="Okazaki Y."/>
            <person name="Orlando V."/>
            <person name="Pang K.C."/>
            <person name="Pavan W.J."/>
            <person name="Pavesi G."/>
            <person name="Pesole G."/>
            <person name="Petrovsky N."/>
            <person name="Piazza S."/>
            <person name="Reed J."/>
            <person name="Reid J.F."/>
            <person name="Ring B.Z."/>
            <person name="Ringwald M."/>
            <person name="Rost B."/>
            <person name="Ruan Y."/>
            <person name="Salzberg S.L."/>
            <person name="Sandelin A."/>
            <person name="Schneider C."/>
            <person name="Schoenbach C."/>
            <person name="Sekiguchi K."/>
            <person name="Semple C.A."/>
            <person name="Seno S."/>
            <person name="Sessa L."/>
            <person name="Sheng Y."/>
            <person name="Shibata Y."/>
            <person name="Shimada H."/>
            <person name="Shimada K."/>
            <person name="Silva D."/>
            <person name="Sinclair B."/>
            <person name="Sperling S."/>
            <person name="Stupka E."/>
            <person name="Sugiura K."/>
            <person name="Sultana R."/>
            <person name="Takenaka Y."/>
            <person name="Taki K."/>
            <person name="Tammoja K."/>
            <person name="Tan S.L."/>
            <person name="Tang S."/>
            <person name="Taylor M.S."/>
            <person name="Tegner J."/>
            <person name="Teichmann S.A."/>
            <person name="Ueda H.R."/>
            <person name="van Nimwegen E."/>
            <person name="Verardo R."/>
            <person name="Wei C.L."/>
            <person name="Yagi K."/>
            <person name="Yamanishi H."/>
            <person name="Zabarovsky E."/>
            <person name="Zhu S."/>
            <person name="Zimmer A."/>
            <person name="Hide W."/>
            <person name="Bult C."/>
            <person name="Grimmond S.M."/>
            <person name="Teasdale R.D."/>
            <person name="Liu E.T."/>
            <person name="Brusic V."/>
            <person name="Quackenbush J."/>
            <person name="Wahlestedt C."/>
            <person name="Mattick J.S."/>
            <person name="Hume D.A."/>
            <person name="Kai C."/>
            <person name="Sasaki D."/>
            <person name="Tomaru Y."/>
            <person name="Fukuda S."/>
            <person name="Kanamori-Katayama M."/>
            <person name="Suzuki M."/>
            <person name="Aoki J."/>
            <person name="Arakawa T."/>
            <person name="Iida J."/>
            <person name="Imamura K."/>
            <person name="Itoh M."/>
            <person name="Kato T."/>
            <person name="Kawaji H."/>
            <person name="Kawagashira N."/>
            <person name="Kawashima T."/>
            <person name="Kojima M."/>
            <person name="Kondo S."/>
            <person name="Konno H."/>
            <person name="Nakano K."/>
            <person name="Ninomiya N."/>
            <person name="Nishio T."/>
            <person name="Okada M."/>
            <person name="Plessy C."/>
            <person name="Shibata K."/>
            <person name="Shiraki T."/>
            <person name="Suzuki S."/>
            <person name="Tagami M."/>
            <person name="Waki K."/>
            <person name="Watahiki A."/>
            <person name="Okamura-Oho Y."/>
            <person name="Suzuki H."/>
            <person name="Kawai J."/>
            <person name="Hayashizaki Y."/>
        </authorList>
    </citation>
    <scope>NUCLEOTIDE SEQUENCE [LARGE SCALE MRNA]</scope>
    <source>
        <strain>C57BL/6J</strain>
        <strain>NOD</strain>
        <tissue>Embryo</tissue>
        <tissue>Muellerian duct</tissue>
        <tissue>Spleen</tissue>
    </source>
</reference>
<reference key="7">
    <citation type="journal article" date="2004" name="Genome Res.">
        <title>The status, quality, and expansion of the NIH full-length cDNA project: the Mammalian Gene Collection (MGC).</title>
        <authorList>
            <consortium name="The MGC Project Team"/>
        </authorList>
    </citation>
    <scope>NUCLEOTIDE SEQUENCE [LARGE SCALE MRNA]</scope>
    <source>
        <strain>FVB/N</strain>
        <tissue>Colon</tissue>
    </source>
</reference>
<reference key="8">
    <citation type="journal article" date="2000" name="Proc. Natl. Acad. Sci. U.S.A.">
        <title>The basic helix-loop-helix transcription factor capsulin controls spleen organogenesis.</title>
        <authorList>
            <person name="Lu J.-R."/>
            <person name="Chang P."/>
            <person name="Richardson J.A."/>
            <person name="Gan L."/>
            <person name="Weiler H."/>
            <person name="Olson E.N."/>
        </authorList>
    </citation>
    <scope>FUNCTION</scope>
</reference>
<accession>O35437</accession>
<accession>Q3U023</accession>
<protein>
    <recommendedName>
        <fullName>Transcription factor 21</fullName>
        <shortName>TCF-21</shortName>
    </recommendedName>
    <alternativeName>
        <fullName>Capsulin</fullName>
    </alternativeName>
    <alternativeName>
        <fullName>Epicardin</fullName>
    </alternativeName>
    <alternativeName>
        <fullName>Podocyte-expressed 1</fullName>
        <shortName>Pod-1</shortName>
    </alternativeName>
</protein>
<proteinExistence type="evidence at transcript level"/>
<feature type="chain" id="PRO_0000127465" description="Transcription factor 21">
    <location>
        <begin position="1"/>
        <end position="179"/>
    </location>
</feature>
<feature type="domain" description="bHLH" evidence="1">
    <location>
        <begin position="79"/>
        <end position="131"/>
    </location>
</feature>
<feature type="region of interest" description="Disordered" evidence="2">
    <location>
        <begin position="19"/>
        <end position="88"/>
    </location>
</feature>
<feature type="compositionally biased region" description="Polar residues" evidence="2">
    <location>
        <begin position="30"/>
        <end position="49"/>
    </location>
</feature>
<feature type="compositionally biased region" description="Polar residues" evidence="2">
    <location>
        <begin position="70"/>
        <end position="80"/>
    </location>
</feature>
<organism>
    <name type="scientific">Mus musculus</name>
    <name type="common">Mouse</name>
    <dbReference type="NCBI Taxonomy" id="10090"/>
    <lineage>
        <taxon>Eukaryota</taxon>
        <taxon>Metazoa</taxon>
        <taxon>Chordata</taxon>
        <taxon>Craniata</taxon>
        <taxon>Vertebrata</taxon>
        <taxon>Euteleostomi</taxon>
        <taxon>Mammalia</taxon>
        <taxon>Eutheria</taxon>
        <taxon>Euarchontoglires</taxon>
        <taxon>Glires</taxon>
        <taxon>Rodentia</taxon>
        <taxon>Myomorpha</taxon>
        <taxon>Muroidea</taxon>
        <taxon>Muridae</taxon>
        <taxon>Murinae</taxon>
        <taxon>Mus</taxon>
        <taxon>Mus</taxon>
    </lineage>
</organism>
<keyword id="KW-0238">DNA-binding</keyword>
<keyword id="KW-0539">Nucleus</keyword>
<keyword id="KW-1185">Reference proteome</keyword>
<keyword id="KW-0804">Transcription</keyword>
<keyword id="KW-0805">Transcription regulation</keyword>
<comment type="function">
    <text evidence="3">Involved in epithelial-mesenchymal interactions in kidney and lung morphogenesis that include epithelial differentiation and branching morphogenesis. May be involved in the organogenesis of the spleen and heart and in cardiac and coronary artery development. May function in the development and sex differentiation of gonad via transcriptional regulation of AD4BP/SF-1.</text>
</comment>
<comment type="subunit">
    <text>Efficient DNA binding requires dimerization with another bHLH protein. Forms a heterodimer with TCF3 and binds the E box (5'-CANNTG-3').</text>
</comment>
<comment type="subcellular location">
    <subcellularLocation>
        <location evidence="1">Nucleus</location>
    </subcellularLocation>
</comment>
<comment type="tissue specificity">
    <text>Expressed at high levels in lung, kidney, gut, heart, ovary and podocytes (visceral glomerular epithelial cells). Also found in spleen, large intestine, uterus, bladder and testis.</text>
</comment>
<comment type="developmental stage">
    <text>Expressed during embryogenesis specifically in mesodermally-derived cells that surround the epithelium of the developing gastrointestinal, genitourinary, respiratory systems and in spiral septum of the heart and in epicardial precursor cells fated to form the coronary arteries. Expression pattern is sex- and stage-dependent during gonadogenesis. At 13.5 dpc expressed at higher levels in testis than ovary. In 3-month old adults expression drastically decreased in testis while it increased in ovary showing an opposite sex-dependent pattern in adults compared with fetuses. Expression in other organs was similar between the adults and the fetal stage.</text>
</comment>
<gene>
    <name type="primary">Tcf21</name>
    <name type="synonym">Pod1</name>
</gene>
<dbReference type="EMBL" id="AF029753">
    <property type="protein sequence ID" value="AAB84256.1"/>
    <property type="molecule type" value="mRNA"/>
</dbReference>
<dbReference type="EMBL" id="AF047418">
    <property type="protein sequence ID" value="AAC62531.1"/>
    <property type="molecule type" value="mRNA"/>
</dbReference>
<dbReference type="EMBL" id="AF036945">
    <property type="protein sequence ID" value="AAC23537.1"/>
    <property type="molecule type" value="mRNA"/>
</dbReference>
<dbReference type="EMBL" id="AF035717">
    <property type="protein sequence ID" value="AAC62513.1"/>
    <property type="molecule type" value="mRNA"/>
</dbReference>
<dbReference type="EMBL" id="AB009453">
    <property type="protein sequence ID" value="BAA23883.1"/>
    <property type="molecule type" value="mRNA"/>
</dbReference>
<dbReference type="EMBL" id="AK011575">
    <property type="protein sequence ID" value="BAB27709.1"/>
    <property type="molecule type" value="mRNA"/>
</dbReference>
<dbReference type="EMBL" id="AK135423">
    <property type="protein sequence ID" value="BAE22527.1"/>
    <property type="molecule type" value="mRNA"/>
</dbReference>
<dbReference type="EMBL" id="AK157289">
    <property type="protein sequence ID" value="BAE34032.1"/>
    <property type="molecule type" value="mRNA"/>
</dbReference>
<dbReference type="EMBL" id="BC053525">
    <property type="protein sequence ID" value="AAH53525.1"/>
    <property type="molecule type" value="mRNA"/>
</dbReference>
<dbReference type="CCDS" id="CCDS23732.1"/>
<dbReference type="RefSeq" id="NP_035675.1">
    <property type="nucleotide sequence ID" value="NM_011545.2"/>
</dbReference>
<dbReference type="SMR" id="O35437"/>
<dbReference type="BioGRID" id="204005">
    <property type="interactions" value="4"/>
</dbReference>
<dbReference type="CORUM" id="O35437"/>
<dbReference type="FunCoup" id="O35437">
    <property type="interactions" value="983"/>
</dbReference>
<dbReference type="IntAct" id="O35437">
    <property type="interactions" value="3"/>
</dbReference>
<dbReference type="MINT" id="O35437"/>
<dbReference type="STRING" id="10090.ENSMUSP00000053178"/>
<dbReference type="iPTMnet" id="O35437"/>
<dbReference type="PhosphoSitePlus" id="O35437"/>
<dbReference type="PaxDb" id="10090-ENSMUSP00000053178"/>
<dbReference type="ProteomicsDB" id="263089"/>
<dbReference type="Antibodypedia" id="19727">
    <property type="antibodies" value="159 antibodies from 24 providers"/>
</dbReference>
<dbReference type="DNASU" id="21412"/>
<dbReference type="Ensembl" id="ENSMUST00000049930.9">
    <property type="protein sequence ID" value="ENSMUSP00000053178.8"/>
    <property type="gene ID" value="ENSMUSG00000045680.9"/>
</dbReference>
<dbReference type="GeneID" id="21412"/>
<dbReference type="KEGG" id="mmu:21412"/>
<dbReference type="UCSC" id="uc007eps.2">
    <property type="organism name" value="mouse"/>
</dbReference>
<dbReference type="AGR" id="MGI:1202715"/>
<dbReference type="CTD" id="6943"/>
<dbReference type="MGI" id="MGI:1202715">
    <property type="gene designation" value="Tcf21"/>
</dbReference>
<dbReference type="VEuPathDB" id="HostDB:ENSMUSG00000045680"/>
<dbReference type="eggNOG" id="KOG4029">
    <property type="taxonomic scope" value="Eukaryota"/>
</dbReference>
<dbReference type="GeneTree" id="ENSGT00940000160174"/>
<dbReference type="HOGENOM" id="CLU_092663_0_0_1"/>
<dbReference type="InParanoid" id="O35437"/>
<dbReference type="OrthoDB" id="6233288at2759"/>
<dbReference type="PhylomeDB" id="O35437"/>
<dbReference type="TreeFam" id="TF350742"/>
<dbReference type="BioGRID-ORCS" id="21412">
    <property type="hits" value="0 hits in 75 CRISPR screens"/>
</dbReference>
<dbReference type="PRO" id="PR:O35437"/>
<dbReference type="Proteomes" id="UP000000589">
    <property type="component" value="Chromosome 10"/>
</dbReference>
<dbReference type="RNAct" id="O35437">
    <property type="molecule type" value="protein"/>
</dbReference>
<dbReference type="Bgee" id="ENSMUSG00000045680">
    <property type="expression patterns" value="Expressed in left lung lobe and 178 other cell types or tissues"/>
</dbReference>
<dbReference type="ExpressionAtlas" id="O35437">
    <property type="expression patterns" value="baseline and differential"/>
</dbReference>
<dbReference type="GO" id="GO:0005654">
    <property type="term" value="C:nucleoplasm"/>
    <property type="evidence" value="ECO:0007669"/>
    <property type="project" value="Ensembl"/>
</dbReference>
<dbReference type="GO" id="GO:0005634">
    <property type="term" value="C:nucleus"/>
    <property type="evidence" value="ECO:0000305"/>
    <property type="project" value="UniProtKB"/>
</dbReference>
<dbReference type="GO" id="GO:0005667">
    <property type="term" value="C:transcription regulator complex"/>
    <property type="evidence" value="ECO:0000314"/>
    <property type="project" value="UniProtKB"/>
</dbReference>
<dbReference type="GO" id="GO:0043425">
    <property type="term" value="F:bHLH transcription factor binding"/>
    <property type="evidence" value="ECO:0000353"/>
    <property type="project" value="UniProtKB"/>
</dbReference>
<dbReference type="GO" id="GO:0001228">
    <property type="term" value="F:DNA-binding transcription activator activity, RNA polymerase II-specific"/>
    <property type="evidence" value="ECO:0000314"/>
    <property type="project" value="UniProtKB"/>
</dbReference>
<dbReference type="GO" id="GO:0001227">
    <property type="term" value="F:DNA-binding transcription repressor activity, RNA polymerase II-specific"/>
    <property type="evidence" value="ECO:0000314"/>
    <property type="project" value="UniProtKB"/>
</dbReference>
<dbReference type="GO" id="GO:0070888">
    <property type="term" value="F:E-box binding"/>
    <property type="evidence" value="ECO:0000314"/>
    <property type="project" value="BHF-UCL"/>
</dbReference>
<dbReference type="GO" id="GO:0042826">
    <property type="term" value="F:histone deacetylase binding"/>
    <property type="evidence" value="ECO:0000353"/>
    <property type="project" value="BHF-UCL"/>
</dbReference>
<dbReference type="GO" id="GO:0050681">
    <property type="term" value="F:nuclear androgen receptor binding"/>
    <property type="evidence" value="ECO:0000353"/>
    <property type="project" value="BHF-UCL"/>
</dbReference>
<dbReference type="GO" id="GO:0046983">
    <property type="term" value="F:protein dimerization activity"/>
    <property type="evidence" value="ECO:0007669"/>
    <property type="project" value="InterPro"/>
</dbReference>
<dbReference type="GO" id="GO:0009887">
    <property type="term" value="P:animal organ morphogenesis"/>
    <property type="evidence" value="ECO:0000315"/>
    <property type="project" value="MGI"/>
</dbReference>
<dbReference type="GO" id="GO:0001658">
    <property type="term" value="P:branching involved in ureteric bud morphogenesis"/>
    <property type="evidence" value="ECO:0000315"/>
    <property type="project" value="MGI"/>
</dbReference>
<dbReference type="GO" id="GO:0014707">
    <property type="term" value="P:branchiomeric skeletal muscle development"/>
    <property type="evidence" value="ECO:0000316"/>
    <property type="project" value="UniProtKB"/>
</dbReference>
<dbReference type="GO" id="GO:0060435">
    <property type="term" value="P:bronchiole development"/>
    <property type="evidence" value="ECO:0000315"/>
    <property type="project" value="MGI"/>
</dbReference>
<dbReference type="GO" id="GO:0060539">
    <property type="term" value="P:diaphragm development"/>
    <property type="evidence" value="ECO:0000316"/>
    <property type="project" value="UniProtKB"/>
</dbReference>
<dbReference type="GO" id="GO:0048557">
    <property type="term" value="P:embryonic digestive tract morphogenesis"/>
    <property type="evidence" value="ECO:0000250"/>
    <property type="project" value="UniProtKB"/>
</dbReference>
<dbReference type="GO" id="GO:0030855">
    <property type="term" value="P:epithelial cell differentiation"/>
    <property type="evidence" value="ECO:0000315"/>
    <property type="project" value="MGI"/>
</dbReference>
<dbReference type="GO" id="GO:0048732">
    <property type="term" value="P:gland development"/>
    <property type="evidence" value="ECO:0000250"/>
    <property type="project" value="UniProtKB"/>
</dbReference>
<dbReference type="GO" id="GO:0032835">
    <property type="term" value="P:glomerulus development"/>
    <property type="evidence" value="ECO:0000315"/>
    <property type="project" value="MGI"/>
</dbReference>
<dbReference type="GO" id="GO:0001822">
    <property type="term" value="P:kidney development"/>
    <property type="evidence" value="ECO:0000315"/>
    <property type="project" value="MGI"/>
</dbReference>
<dbReference type="GO" id="GO:0048286">
    <property type="term" value="P:lung alveolus development"/>
    <property type="evidence" value="ECO:0000315"/>
    <property type="project" value="MGI"/>
</dbReference>
<dbReference type="GO" id="GO:0060425">
    <property type="term" value="P:lung morphogenesis"/>
    <property type="evidence" value="ECO:0000315"/>
    <property type="project" value="MGI"/>
</dbReference>
<dbReference type="GO" id="GO:0060426">
    <property type="term" value="P:lung vasculature development"/>
    <property type="evidence" value="ECO:0000315"/>
    <property type="project" value="MGI"/>
</dbReference>
<dbReference type="GO" id="GO:0072277">
    <property type="term" value="P:metanephric glomerular capillary formation"/>
    <property type="evidence" value="ECO:0000315"/>
    <property type="project" value="UniProtKB"/>
</dbReference>
<dbReference type="GO" id="GO:0072162">
    <property type="term" value="P:metanephric mesenchymal cell differentiation"/>
    <property type="evidence" value="ECO:0000315"/>
    <property type="project" value="UniProtKB"/>
</dbReference>
<dbReference type="GO" id="GO:0001763">
    <property type="term" value="P:morphogenesis of a branching structure"/>
    <property type="evidence" value="ECO:0000315"/>
    <property type="project" value="MGI"/>
</dbReference>
<dbReference type="GO" id="GO:0060766">
    <property type="term" value="P:negative regulation of androgen receptor signaling pathway"/>
    <property type="evidence" value="ECO:0000314"/>
    <property type="project" value="BHF-UCL"/>
</dbReference>
<dbReference type="GO" id="GO:0000122">
    <property type="term" value="P:negative regulation of transcription by RNA polymerase II"/>
    <property type="evidence" value="ECO:0000314"/>
    <property type="project" value="UniProtKB"/>
</dbReference>
<dbReference type="GO" id="GO:0045944">
    <property type="term" value="P:positive regulation of transcription by RNA polymerase II"/>
    <property type="evidence" value="ECO:0000314"/>
    <property type="project" value="UniProtKB"/>
</dbReference>
<dbReference type="GO" id="GO:0048608">
    <property type="term" value="P:reproductive structure development"/>
    <property type="evidence" value="ECO:0000315"/>
    <property type="project" value="MGI"/>
</dbReference>
<dbReference type="GO" id="GO:0060541">
    <property type="term" value="P:respiratory system development"/>
    <property type="evidence" value="ECO:0000315"/>
    <property type="project" value="MGI"/>
</dbReference>
<dbReference type="GO" id="GO:0060021">
    <property type="term" value="P:roof of mouth development"/>
    <property type="evidence" value="ECO:0000316"/>
    <property type="project" value="UniProtKB"/>
</dbReference>
<dbReference type="GO" id="GO:0060008">
    <property type="term" value="P:Sertoli cell differentiation"/>
    <property type="evidence" value="ECO:0000250"/>
    <property type="project" value="UniProtKB"/>
</dbReference>
<dbReference type="GO" id="GO:0007530">
    <property type="term" value="P:sex determination"/>
    <property type="evidence" value="ECO:0000315"/>
    <property type="project" value="MGI"/>
</dbReference>
<dbReference type="GO" id="GO:0007548">
    <property type="term" value="P:sex differentiation"/>
    <property type="evidence" value="ECO:0000315"/>
    <property type="project" value="MGI"/>
</dbReference>
<dbReference type="GO" id="GO:0048536">
    <property type="term" value="P:spleen development"/>
    <property type="evidence" value="ECO:0000315"/>
    <property type="project" value="UniProtKB"/>
</dbReference>
<dbReference type="GO" id="GO:0001657">
    <property type="term" value="P:ureteric bud development"/>
    <property type="evidence" value="ECO:0000315"/>
    <property type="project" value="MGI"/>
</dbReference>
<dbReference type="GO" id="GO:0001944">
    <property type="term" value="P:vasculature development"/>
    <property type="evidence" value="ECO:0000315"/>
    <property type="project" value="MGI"/>
</dbReference>
<dbReference type="CDD" id="cd19704">
    <property type="entry name" value="bHLH_TS_TCF21_capsulin"/>
    <property type="match status" value="1"/>
</dbReference>
<dbReference type="FunFam" id="4.10.280.10:FF:000010">
    <property type="entry name" value="Scleraxis bHLH transcription factor"/>
    <property type="match status" value="1"/>
</dbReference>
<dbReference type="Gene3D" id="4.10.280.10">
    <property type="entry name" value="Helix-loop-helix DNA-binding domain"/>
    <property type="match status" value="1"/>
</dbReference>
<dbReference type="InterPro" id="IPR011598">
    <property type="entry name" value="bHLH_dom"/>
</dbReference>
<dbReference type="InterPro" id="IPR050283">
    <property type="entry name" value="E-box_TF_Regulators"/>
</dbReference>
<dbReference type="InterPro" id="IPR036638">
    <property type="entry name" value="HLH_DNA-bd_sf"/>
</dbReference>
<dbReference type="PANTHER" id="PTHR23349">
    <property type="entry name" value="BASIC HELIX-LOOP-HELIX TRANSCRIPTION FACTOR, TWIST"/>
    <property type="match status" value="1"/>
</dbReference>
<dbReference type="PANTHER" id="PTHR23349:SF67">
    <property type="entry name" value="TRANSCRIPTION FACTOR 21"/>
    <property type="match status" value="1"/>
</dbReference>
<dbReference type="Pfam" id="PF00010">
    <property type="entry name" value="HLH"/>
    <property type="match status" value="1"/>
</dbReference>
<dbReference type="SMART" id="SM00353">
    <property type="entry name" value="HLH"/>
    <property type="match status" value="1"/>
</dbReference>
<dbReference type="SUPFAM" id="SSF47459">
    <property type="entry name" value="HLH, helix-loop-helix DNA-binding domain"/>
    <property type="match status" value="1"/>
</dbReference>
<dbReference type="PROSITE" id="PS50888">
    <property type="entry name" value="BHLH"/>
    <property type="match status" value="1"/>
</dbReference>
<name>TCF21_MOUSE</name>
<evidence type="ECO:0000255" key="1">
    <source>
        <dbReference type="PROSITE-ProRule" id="PRU00981"/>
    </source>
</evidence>
<evidence type="ECO:0000256" key="2">
    <source>
        <dbReference type="SAM" id="MobiDB-lite"/>
    </source>
</evidence>
<evidence type="ECO:0000269" key="3">
    <source>
    </source>
</evidence>